<accession>Q20059</accession>
<accession>B3GWA7</accession>
<accession>Q9U3G8</accession>
<feature type="chain" id="PRO_0000051506" description="WD repeat-containing protein 48 homolog">
    <location>
        <begin position="1"/>
        <end position="683"/>
    </location>
</feature>
<feature type="repeat" description="WD 1">
    <location>
        <begin position="27"/>
        <end position="82"/>
    </location>
</feature>
<feature type="repeat" description="WD 2">
    <location>
        <begin position="88"/>
        <end position="130"/>
    </location>
</feature>
<feature type="repeat" description="WD 3">
    <location>
        <begin position="133"/>
        <end position="167"/>
    </location>
</feature>
<feature type="repeat" description="WD 4">
    <location>
        <begin position="176"/>
        <end position="215"/>
    </location>
</feature>
<feature type="repeat" description="WD 5">
    <location>
        <begin position="218"/>
        <end position="257"/>
    </location>
</feature>
<feature type="repeat" description="WD 6">
    <location>
        <begin position="260"/>
        <end position="299"/>
    </location>
</feature>
<feature type="repeat" description="WD 7">
    <location>
        <begin position="302"/>
        <end position="343"/>
    </location>
</feature>
<feature type="repeat" description="WD 8">
    <location>
        <begin position="389"/>
        <end position="428"/>
    </location>
</feature>
<feature type="region of interest" description="Disordered" evidence="1">
    <location>
        <begin position="341"/>
        <end position="364"/>
    </location>
</feature>
<feature type="compositionally biased region" description="Low complexity" evidence="1">
    <location>
        <begin position="351"/>
        <end position="364"/>
    </location>
</feature>
<feature type="splice variant" id="VSP_037627" description="In isoform c." evidence="3">
    <original>D</original>
    <variation>DGKVFRNKKILMVFE</variation>
    <location>
        <position position="630"/>
    </location>
</feature>
<feature type="splice variant" id="VSP_006793" description="In isoform b." evidence="3">
    <location>
        <begin position="631"/>
        <end position="633"/>
    </location>
</feature>
<organism>
    <name type="scientific">Caenorhabditis elegans</name>
    <dbReference type="NCBI Taxonomy" id="6239"/>
    <lineage>
        <taxon>Eukaryota</taxon>
        <taxon>Metazoa</taxon>
        <taxon>Ecdysozoa</taxon>
        <taxon>Nematoda</taxon>
        <taxon>Chromadorea</taxon>
        <taxon>Rhabditida</taxon>
        <taxon>Rhabditina</taxon>
        <taxon>Rhabditomorpha</taxon>
        <taxon>Rhabditoidea</taxon>
        <taxon>Rhabditidae</taxon>
        <taxon>Peloderinae</taxon>
        <taxon>Caenorhabditis</taxon>
    </lineage>
</organism>
<proteinExistence type="evidence at protein level"/>
<keyword id="KW-0025">Alternative splicing</keyword>
<keyword id="KW-1185">Reference proteome</keyword>
<keyword id="KW-0677">Repeat</keyword>
<keyword id="KW-0833">Ubl conjugation pathway</keyword>
<keyword id="KW-0853">WD repeat</keyword>
<gene>
    <name type="primary">wdr-48</name>
    <name type="ORF">F35G12.4</name>
</gene>
<evidence type="ECO:0000256" key="1">
    <source>
        <dbReference type="SAM" id="MobiDB-lite"/>
    </source>
</evidence>
<evidence type="ECO:0000269" key="2">
    <source>
    </source>
</evidence>
<evidence type="ECO:0000305" key="3"/>
<comment type="function">
    <text evidence="2">Together with wdr-20, binds to and stimulates the activity of the deubiquitinating enzyme usp-46, leading to deubiquitination and stabilization of the glr-1 glutamate receptor.</text>
</comment>
<comment type="subunit">
    <text evidence="2">Interacts with usp-46; the interaction increases the catalytic activity of usp-46 in the presence of wdr-20.</text>
</comment>
<comment type="alternative products">
    <event type="alternative splicing"/>
    <isoform>
        <id>Q20059-1</id>
        <name>a</name>
        <sequence type="displayed"/>
    </isoform>
    <isoform>
        <id>Q20059-2</id>
        <name>b</name>
        <sequence type="described" ref="VSP_006793"/>
    </isoform>
    <isoform>
        <id>Q20059-3</id>
        <name>c</name>
        <sequence type="described" ref="VSP_037627"/>
    </isoform>
</comment>
<comment type="tissue specificity">
    <text evidence="2">Expressed in several head neurons and cells in the tail including the anal depressor cell.</text>
</comment>
<comment type="disruption phenotype">
    <text evidence="2">Changed locomotion behavior with mutants displaying decreased reversal frequencies consistent with decreased glutamergic signaling.</text>
</comment>
<comment type="similarity">
    <text evidence="3">Belongs to the WD repeat WDR48 family.</text>
</comment>
<sequence length="683" mass="76674">MSSCVNTSQTGPKKKISFIIRDEHEYSNRSAVSALQYDAQNGRLFTGGSDTIIRTWSVPHHKDAFSARGGVRSPGKNSPVQYQGSLEQHTDWVNDMILCGHGKILISASNDTTVKVWNIERDNKHGFIDCIRTHKDYVSCLAYAPIVEKAVSASFDHNIFVYDINANFKTVNNLIGCKDSIYSLATTPNLSLVLGAGTEKCIRLFDPRTNEKIMKLRGHTDNVRALVVNDDGTRALSAGSDATIRLWDIGQQRCIATCIAHEEGVWTLQVDSSFTTVYSAGKDKMVVKTPLYDFTKSQLLFKEEAPVKKLLLSEKDNPVSLWVGTWKSDIKRWSIRPSAQLSIGGDEDGPSTSNANHSVSASSSPPVTFKYIRVKDQKGQQSTPELVIPGAPAIKKHAMLSDKRHVLTRDSDGNVALYDVLAARKIKDYGKRIFEEVVDENSRQVYIPSWFVVDSKSGMLQITLDELDALSSWLSSKDAGFDDNDRETKLNYGGMMLRSLFERWPPCKMTNVDAADADDVQKATLNFISLPEHTPLIICEGNGRPLYRLLVGDAGKEFEANELAQIAPMWVIDAIERNQLPKFNKMPFYLLPHPSTNPKQPKKDRLSATEMLQVKKVMEHVYEKILSTNDDITVGSIPLNQIHTKMEMYCNDQRLEPDMDLRTVKHLYWKQSGELLLHYKPVK</sequence>
<reference key="1">
    <citation type="journal article" date="1998" name="Science">
        <title>Genome sequence of the nematode C. elegans: a platform for investigating biology.</title>
        <authorList>
            <consortium name="The C. elegans sequencing consortium"/>
        </authorList>
    </citation>
    <scope>NUCLEOTIDE SEQUENCE [LARGE SCALE GENOMIC DNA]</scope>
    <scope>ALTERNATIVE SPLICING</scope>
    <source>
        <strain>Bristol N2</strain>
    </source>
</reference>
<reference key="2">
    <citation type="journal article" date="2014" name="J. Biol. Chem.">
        <title>The WD40-repeat proteins WDR-20 and WDR-48 bind and activate the deubiquitinating enzyme USP-46 to promote the abundance of the glutamate receptor GLR-1 in the ventral nerve cord of Caenorhabditis elegans.</title>
        <authorList>
            <person name="Dahlberg C.L."/>
            <person name="Juo P."/>
        </authorList>
    </citation>
    <scope>FUNCTION</scope>
    <scope>INTERACTION WITH USP-46</scope>
    <scope>TISSUE SPECIFICITY</scope>
    <scope>DISRUPTION PHENOTYPE</scope>
</reference>
<protein>
    <recommendedName>
        <fullName>WD repeat-containing protein 48 homolog</fullName>
    </recommendedName>
</protein>
<dbReference type="EMBL" id="Z46242">
    <property type="protein sequence ID" value="CAA86335.2"/>
    <property type="molecule type" value="Genomic_DNA"/>
</dbReference>
<dbReference type="EMBL" id="Z46242">
    <property type="protein sequence ID" value="CAA86338.2"/>
    <property type="molecule type" value="Genomic_DNA"/>
</dbReference>
<dbReference type="EMBL" id="Z46242">
    <property type="protein sequence ID" value="CAQ58416.1"/>
    <property type="molecule type" value="Genomic_DNA"/>
</dbReference>
<dbReference type="PIR" id="T21808">
    <property type="entry name" value="T21808"/>
</dbReference>
<dbReference type="PIR" id="T21810">
    <property type="entry name" value="T21810"/>
</dbReference>
<dbReference type="RefSeq" id="NP_001129837.1">
    <molecule id="Q20059-3"/>
    <property type="nucleotide sequence ID" value="NM_001136365.4"/>
</dbReference>
<dbReference type="RefSeq" id="NP_497930.2">
    <molecule id="Q20059-1"/>
    <property type="nucleotide sequence ID" value="NM_065529.6"/>
</dbReference>
<dbReference type="RefSeq" id="NP_497931.2">
    <molecule id="Q20059-2"/>
    <property type="nucleotide sequence ID" value="NM_065530.5"/>
</dbReference>
<dbReference type="SMR" id="Q20059"/>
<dbReference type="BioGRID" id="40836">
    <property type="interactions" value="7"/>
</dbReference>
<dbReference type="FunCoup" id="Q20059">
    <property type="interactions" value="3806"/>
</dbReference>
<dbReference type="STRING" id="6239.F35G12.4c.1"/>
<dbReference type="PaxDb" id="6239-F35G12.4c"/>
<dbReference type="PeptideAtlas" id="Q20059"/>
<dbReference type="EnsemblMetazoa" id="F35G12.4a.1">
    <molecule id="Q20059-1"/>
    <property type="protein sequence ID" value="F35G12.4a.1"/>
    <property type="gene ID" value="WBGene00009441"/>
</dbReference>
<dbReference type="EnsemblMetazoa" id="F35G12.4b.1">
    <molecule id="Q20059-2"/>
    <property type="protein sequence ID" value="F35G12.4b.1"/>
    <property type="gene ID" value="WBGene00009441"/>
</dbReference>
<dbReference type="EnsemblMetazoa" id="F35G12.4c.1">
    <molecule id="Q20059-3"/>
    <property type="protein sequence ID" value="F35G12.4c.1"/>
    <property type="gene ID" value="WBGene00009441"/>
</dbReference>
<dbReference type="GeneID" id="175600"/>
<dbReference type="KEGG" id="cel:CELE_F35G12.4"/>
<dbReference type="UCSC" id="F35G12.4b">
    <molecule id="Q20059-1"/>
    <property type="organism name" value="c. elegans"/>
</dbReference>
<dbReference type="AGR" id="WB:WBGene00009441"/>
<dbReference type="CTD" id="175600"/>
<dbReference type="WormBase" id="F35G12.4a">
    <molecule id="Q20059-1"/>
    <property type="protein sequence ID" value="CE31501"/>
    <property type="gene ID" value="WBGene00009441"/>
    <property type="gene designation" value="wdr-48"/>
</dbReference>
<dbReference type="WormBase" id="F35G12.4b">
    <molecule id="Q20059-2"/>
    <property type="protein sequence ID" value="CE31502"/>
    <property type="gene ID" value="WBGene00009441"/>
    <property type="gene designation" value="wdr-48"/>
</dbReference>
<dbReference type="WormBase" id="F35G12.4c">
    <molecule id="Q20059-3"/>
    <property type="protein sequence ID" value="CE42674"/>
    <property type="gene ID" value="WBGene00009441"/>
    <property type="gene designation" value="wdr-48"/>
</dbReference>
<dbReference type="eggNOG" id="KOG0308">
    <property type="taxonomic scope" value="Eukaryota"/>
</dbReference>
<dbReference type="GeneTree" id="ENSGT00920000149157"/>
<dbReference type="InParanoid" id="Q20059"/>
<dbReference type="OMA" id="IRHYHIL"/>
<dbReference type="OrthoDB" id="2421129at2759"/>
<dbReference type="PhylomeDB" id="Q20059"/>
<dbReference type="Reactome" id="R-CEL-5689880">
    <property type="pathway name" value="Ub-specific processing proteases"/>
</dbReference>
<dbReference type="PRO" id="PR:Q20059"/>
<dbReference type="Proteomes" id="UP000001940">
    <property type="component" value="Chromosome III"/>
</dbReference>
<dbReference type="Bgee" id="WBGene00009441">
    <property type="expression patterns" value="Expressed in germ line (C elegans) and 4 other cell types or tissues"/>
</dbReference>
<dbReference type="GO" id="GO:0043130">
    <property type="term" value="F:ubiquitin binding"/>
    <property type="evidence" value="ECO:0000318"/>
    <property type="project" value="GO_Central"/>
</dbReference>
<dbReference type="GO" id="GO:0000724">
    <property type="term" value="P:double-strand break repair via homologous recombination"/>
    <property type="evidence" value="ECO:0000318"/>
    <property type="project" value="GO_Central"/>
</dbReference>
<dbReference type="GO" id="GO:0010628">
    <property type="term" value="P:positive regulation of gene expression"/>
    <property type="evidence" value="ECO:0000314"/>
    <property type="project" value="UniProtKB"/>
</dbReference>
<dbReference type="GO" id="GO:0090326">
    <property type="term" value="P:positive regulation of locomotion involved in locomotory behavior"/>
    <property type="evidence" value="ECO:0000315"/>
    <property type="project" value="UniProtKB"/>
</dbReference>
<dbReference type="GO" id="GO:1903003">
    <property type="term" value="P:positive regulation of protein deubiquitination"/>
    <property type="evidence" value="ECO:0000353"/>
    <property type="project" value="UniProtKB"/>
</dbReference>
<dbReference type="GO" id="GO:2000010">
    <property type="term" value="P:positive regulation of protein localization to cell surface"/>
    <property type="evidence" value="ECO:0000314"/>
    <property type="project" value="UniProtKB"/>
</dbReference>
<dbReference type="CDD" id="cd17041">
    <property type="entry name" value="Ubl_WDR48"/>
    <property type="match status" value="1"/>
</dbReference>
<dbReference type="CDD" id="cd00200">
    <property type="entry name" value="WD40"/>
    <property type="match status" value="1"/>
</dbReference>
<dbReference type="FunFam" id="2.130.10.10:FF:002191">
    <property type="entry name" value="WD repeat-containing protein 48 homolog"/>
    <property type="match status" value="1"/>
</dbReference>
<dbReference type="Gene3D" id="2.130.10.10">
    <property type="entry name" value="YVTN repeat-like/Quinoprotein amine dehydrogenase"/>
    <property type="match status" value="2"/>
</dbReference>
<dbReference type="InterPro" id="IPR020472">
    <property type="entry name" value="G-protein_beta_WD-40_rep"/>
</dbReference>
<dbReference type="InterPro" id="IPR015943">
    <property type="entry name" value="WD40/YVTN_repeat-like_dom_sf"/>
</dbReference>
<dbReference type="InterPro" id="IPR019775">
    <property type="entry name" value="WD40_repeat_CS"/>
</dbReference>
<dbReference type="InterPro" id="IPR036322">
    <property type="entry name" value="WD40_repeat_dom_sf"/>
</dbReference>
<dbReference type="InterPro" id="IPR001680">
    <property type="entry name" value="WD40_rpt"/>
</dbReference>
<dbReference type="InterPro" id="IPR051246">
    <property type="entry name" value="WDR48"/>
</dbReference>
<dbReference type="InterPro" id="IPR021772">
    <property type="entry name" value="WDR48/Bun107"/>
</dbReference>
<dbReference type="PANTHER" id="PTHR19862">
    <property type="entry name" value="WD REPEAT-CONTAINING PROTEIN 48"/>
    <property type="match status" value="1"/>
</dbReference>
<dbReference type="PANTHER" id="PTHR19862:SF14">
    <property type="entry name" value="WD REPEAT-CONTAINING PROTEIN 48"/>
    <property type="match status" value="1"/>
</dbReference>
<dbReference type="Pfam" id="PF11816">
    <property type="entry name" value="DUF3337"/>
    <property type="match status" value="1"/>
</dbReference>
<dbReference type="Pfam" id="PF00400">
    <property type="entry name" value="WD40"/>
    <property type="match status" value="4"/>
</dbReference>
<dbReference type="PRINTS" id="PR00320">
    <property type="entry name" value="GPROTEINBRPT"/>
</dbReference>
<dbReference type="SMART" id="SM00320">
    <property type="entry name" value="WD40"/>
    <property type="match status" value="6"/>
</dbReference>
<dbReference type="SUPFAM" id="SSF50978">
    <property type="entry name" value="WD40 repeat-like"/>
    <property type="match status" value="1"/>
</dbReference>
<dbReference type="PROSITE" id="PS00678">
    <property type="entry name" value="WD_REPEATS_1"/>
    <property type="match status" value="2"/>
</dbReference>
<dbReference type="PROSITE" id="PS50082">
    <property type="entry name" value="WD_REPEATS_2"/>
    <property type="match status" value="4"/>
</dbReference>
<dbReference type="PROSITE" id="PS50294">
    <property type="entry name" value="WD_REPEATS_REGION"/>
    <property type="match status" value="1"/>
</dbReference>
<name>WDR48_CAEEL</name>